<sequence length="380" mass="42603">MKKQCVAMLLAGGKGSRLSGLTKNMAKPAVSFGGKYRIIDFTLSNCSNSGIDTVGILTQYQPLELNSYIGIGSAWDLDRYNGGVTVLPPYAESSEVKWYKGTASSIYENLNYLNQYDPEYVLILSGDHIYKMDYGKMLDYHIEKKADVTISVIEVGWEEASRFGIMKANPDGTITHFDEKPKFPKSNLASMGIYIFNWPLLKQYLEMDDQNPYSSHDFGKDIIPLLLEEKKKLSAYPFKGYWKDVGTVQSLWEANMDLLKEDSELKLFERKWKIYSVNPNQPPQFISSDAQVQDSLVNEGCVVYGNVSHSVLFQGVTVGKHTTVTSSVIMPDVTIGEHVVIENAIVPNGMVLPDGAVIRSEKDIEEVLLVSEEFVEKELI</sequence>
<reference key="1">
    <citation type="journal article" date="1994" name="Mol. Microbiol.">
        <title>Glycogen in Bacillus subtilis: molecular characterization of an operon encoding enzymes involved in glycogen biosynthesis and degradation.</title>
        <authorList>
            <person name="Kiel J.A.K.W."/>
            <person name="Boels J.M."/>
            <person name="Beldman G."/>
            <person name="Venema G."/>
        </authorList>
    </citation>
    <scope>NUCLEOTIDE SEQUENCE [GENOMIC DNA]</scope>
    <source>
        <strain>168</strain>
    </source>
</reference>
<reference key="2">
    <citation type="journal article" date="1997" name="Microbiology">
        <title>Sequencing and functional annotation of the Bacillus subtilis genes in the 200 kb rrnB-dnaB region.</title>
        <authorList>
            <person name="Lapidus A."/>
            <person name="Galleron N."/>
            <person name="Sorokin A."/>
            <person name="Ehrlich S.D."/>
        </authorList>
    </citation>
    <scope>NUCLEOTIDE SEQUENCE [GENOMIC DNA]</scope>
    <source>
        <strain>168</strain>
    </source>
</reference>
<reference key="3">
    <citation type="journal article" date="1997" name="Nature">
        <title>The complete genome sequence of the Gram-positive bacterium Bacillus subtilis.</title>
        <authorList>
            <person name="Kunst F."/>
            <person name="Ogasawara N."/>
            <person name="Moszer I."/>
            <person name="Albertini A.M."/>
            <person name="Alloni G."/>
            <person name="Azevedo V."/>
            <person name="Bertero M.G."/>
            <person name="Bessieres P."/>
            <person name="Bolotin A."/>
            <person name="Borchert S."/>
            <person name="Borriss R."/>
            <person name="Boursier L."/>
            <person name="Brans A."/>
            <person name="Braun M."/>
            <person name="Brignell S.C."/>
            <person name="Bron S."/>
            <person name="Brouillet S."/>
            <person name="Bruschi C.V."/>
            <person name="Caldwell B."/>
            <person name="Capuano V."/>
            <person name="Carter N.M."/>
            <person name="Choi S.-K."/>
            <person name="Codani J.-J."/>
            <person name="Connerton I.F."/>
            <person name="Cummings N.J."/>
            <person name="Daniel R.A."/>
            <person name="Denizot F."/>
            <person name="Devine K.M."/>
            <person name="Duesterhoeft A."/>
            <person name="Ehrlich S.D."/>
            <person name="Emmerson P.T."/>
            <person name="Entian K.-D."/>
            <person name="Errington J."/>
            <person name="Fabret C."/>
            <person name="Ferrari E."/>
            <person name="Foulger D."/>
            <person name="Fritz C."/>
            <person name="Fujita M."/>
            <person name="Fujita Y."/>
            <person name="Fuma S."/>
            <person name="Galizzi A."/>
            <person name="Galleron N."/>
            <person name="Ghim S.-Y."/>
            <person name="Glaser P."/>
            <person name="Goffeau A."/>
            <person name="Golightly E.J."/>
            <person name="Grandi G."/>
            <person name="Guiseppi G."/>
            <person name="Guy B.J."/>
            <person name="Haga K."/>
            <person name="Haiech J."/>
            <person name="Harwood C.R."/>
            <person name="Henaut A."/>
            <person name="Hilbert H."/>
            <person name="Holsappel S."/>
            <person name="Hosono S."/>
            <person name="Hullo M.-F."/>
            <person name="Itaya M."/>
            <person name="Jones L.-M."/>
            <person name="Joris B."/>
            <person name="Karamata D."/>
            <person name="Kasahara Y."/>
            <person name="Klaerr-Blanchard M."/>
            <person name="Klein C."/>
            <person name="Kobayashi Y."/>
            <person name="Koetter P."/>
            <person name="Koningstein G."/>
            <person name="Krogh S."/>
            <person name="Kumano M."/>
            <person name="Kurita K."/>
            <person name="Lapidus A."/>
            <person name="Lardinois S."/>
            <person name="Lauber J."/>
            <person name="Lazarevic V."/>
            <person name="Lee S.-M."/>
            <person name="Levine A."/>
            <person name="Liu H."/>
            <person name="Masuda S."/>
            <person name="Mauel C."/>
            <person name="Medigue C."/>
            <person name="Medina N."/>
            <person name="Mellado R.P."/>
            <person name="Mizuno M."/>
            <person name="Moestl D."/>
            <person name="Nakai S."/>
            <person name="Noback M."/>
            <person name="Noone D."/>
            <person name="O'Reilly M."/>
            <person name="Ogawa K."/>
            <person name="Ogiwara A."/>
            <person name="Oudega B."/>
            <person name="Park S.-H."/>
            <person name="Parro V."/>
            <person name="Pohl T.M."/>
            <person name="Portetelle D."/>
            <person name="Porwollik S."/>
            <person name="Prescott A.M."/>
            <person name="Presecan E."/>
            <person name="Pujic P."/>
            <person name="Purnelle B."/>
            <person name="Rapoport G."/>
            <person name="Rey M."/>
            <person name="Reynolds S."/>
            <person name="Rieger M."/>
            <person name="Rivolta C."/>
            <person name="Rocha E."/>
            <person name="Roche B."/>
            <person name="Rose M."/>
            <person name="Sadaie Y."/>
            <person name="Sato T."/>
            <person name="Scanlan E."/>
            <person name="Schleich S."/>
            <person name="Schroeter R."/>
            <person name="Scoffone F."/>
            <person name="Sekiguchi J."/>
            <person name="Sekowska A."/>
            <person name="Seror S.J."/>
            <person name="Serror P."/>
            <person name="Shin B.-S."/>
            <person name="Soldo B."/>
            <person name="Sorokin A."/>
            <person name="Tacconi E."/>
            <person name="Takagi T."/>
            <person name="Takahashi H."/>
            <person name="Takemaru K."/>
            <person name="Takeuchi M."/>
            <person name="Tamakoshi A."/>
            <person name="Tanaka T."/>
            <person name="Terpstra P."/>
            <person name="Tognoni A."/>
            <person name="Tosato V."/>
            <person name="Uchiyama S."/>
            <person name="Vandenbol M."/>
            <person name="Vannier F."/>
            <person name="Vassarotti A."/>
            <person name="Viari A."/>
            <person name="Wambutt R."/>
            <person name="Wedler E."/>
            <person name="Wedler H."/>
            <person name="Weitzenegger T."/>
            <person name="Winters P."/>
            <person name="Wipat A."/>
            <person name="Yamamoto H."/>
            <person name="Yamane K."/>
            <person name="Yasumoto K."/>
            <person name="Yata K."/>
            <person name="Yoshida K."/>
            <person name="Yoshikawa H.-F."/>
            <person name="Zumstein E."/>
            <person name="Yoshikawa H."/>
            <person name="Danchin A."/>
        </authorList>
    </citation>
    <scope>NUCLEOTIDE SEQUENCE [LARGE SCALE GENOMIC DNA]</scope>
    <source>
        <strain>168</strain>
    </source>
</reference>
<feature type="chain" id="PRO_0000195284" description="Glucose-1-phosphate adenylyltransferase">
    <location>
        <begin position="1"/>
        <end position="380"/>
    </location>
</feature>
<feature type="binding site" evidence="1">
    <location>
        <position position="99"/>
    </location>
    <ligand>
        <name>alpha-D-glucose 1-phosphate</name>
        <dbReference type="ChEBI" id="CHEBI:58601"/>
    </ligand>
</feature>
<feature type="binding site" evidence="1">
    <location>
        <position position="164"/>
    </location>
    <ligand>
        <name>alpha-D-glucose 1-phosphate</name>
        <dbReference type="ChEBI" id="CHEBI:58601"/>
    </ligand>
</feature>
<feature type="binding site" evidence="1">
    <location>
        <begin position="179"/>
        <end position="180"/>
    </location>
    <ligand>
        <name>alpha-D-glucose 1-phosphate</name>
        <dbReference type="ChEBI" id="CHEBI:58601"/>
    </ligand>
</feature>
<feature type="binding site" evidence="1">
    <location>
        <position position="190"/>
    </location>
    <ligand>
        <name>alpha-D-glucose 1-phosphate</name>
        <dbReference type="ChEBI" id="CHEBI:58601"/>
    </ligand>
</feature>
<keyword id="KW-0067">ATP-binding</keyword>
<keyword id="KW-0119">Carbohydrate metabolism</keyword>
<keyword id="KW-0320">Glycogen biosynthesis</keyword>
<keyword id="KW-0321">Glycogen metabolism</keyword>
<keyword id="KW-0547">Nucleotide-binding</keyword>
<keyword id="KW-0548">Nucleotidyltransferase</keyword>
<keyword id="KW-1185">Reference proteome</keyword>
<keyword id="KW-0808">Transferase</keyword>
<gene>
    <name evidence="1" type="primary">glgC</name>
    <name type="ordered locus">BSU30970</name>
</gene>
<comment type="function">
    <text evidence="1">Involved in the biosynthesis of ADP-glucose, a building block required for the elongation reactions to produce glycogen. Catalyzes the reaction between ATP and alpha-D-glucose 1-phosphate (G1P) to produce pyrophosphate and ADP-Glc.</text>
</comment>
<comment type="catalytic activity">
    <reaction evidence="1">
        <text>alpha-D-glucose 1-phosphate + ATP + H(+) = ADP-alpha-D-glucose + diphosphate</text>
        <dbReference type="Rhea" id="RHEA:12120"/>
        <dbReference type="ChEBI" id="CHEBI:15378"/>
        <dbReference type="ChEBI" id="CHEBI:30616"/>
        <dbReference type="ChEBI" id="CHEBI:33019"/>
        <dbReference type="ChEBI" id="CHEBI:57498"/>
        <dbReference type="ChEBI" id="CHEBI:58601"/>
        <dbReference type="EC" id="2.7.7.27"/>
    </reaction>
</comment>
<comment type="pathway">
    <text evidence="1">Glycan biosynthesis; glycogen biosynthesis.</text>
</comment>
<comment type="subunit">
    <text evidence="1">Homotetramer.</text>
</comment>
<comment type="induction">
    <text>Expressed exclusively on media containing carbon sources that allow efficient sporulation.</text>
</comment>
<comment type="similarity">
    <text evidence="1">Belongs to the bacterial/plant glucose-1-phosphate adenylyltransferase family.</text>
</comment>
<evidence type="ECO:0000255" key="1">
    <source>
        <dbReference type="HAMAP-Rule" id="MF_00624"/>
    </source>
</evidence>
<name>GLGC_BACSU</name>
<organism>
    <name type="scientific">Bacillus subtilis (strain 168)</name>
    <dbReference type="NCBI Taxonomy" id="224308"/>
    <lineage>
        <taxon>Bacteria</taxon>
        <taxon>Bacillati</taxon>
        <taxon>Bacillota</taxon>
        <taxon>Bacilli</taxon>
        <taxon>Bacillales</taxon>
        <taxon>Bacillaceae</taxon>
        <taxon>Bacillus</taxon>
    </lineage>
</organism>
<protein>
    <recommendedName>
        <fullName evidence="1">Glucose-1-phosphate adenylyltransferase</fullName>
        <ecNumber evidence="1">2.7.7.27</ecNumber>
    </recommendedName>
    <alternativeName>
        <fullName evidence="1">ADP-glucose pyrophosphorylase</fullName>
        <shortName evidence="1">ADPGlc PPase</shortName>
    </alternativeName>
    <alternativeName>
        <fullName evidence="1">ADP-glucose synthase</fullName>
    </alternativeName>
</protein>
<dbReference type="EC" id="2.7.7.27" evidence="1"/>
<dbReference type="EMBL" id="Z25795">
    <property type="protein sequence ID" value="CAA81041.1"/>
    <property type="molecule type" value="Genomic_DNA"/>
</dbReference>
<dbReference type="EMBL" id="AF008220">
    <property type="protein sequence ID" value="AAC00215.1"/>
    <property type="molecule type" value="Genomic_DNA"/>
</dbReference>
<dbReference type="EMBL" id="AL009126">
    <property type="protein sequence ID" value="CAB15075.1"/>
    <property type="molecule type" value="Genomic_DNA"/>
</dbReference>
<dbReference type="PIR" id="S40049">
    <property type="entry name" value="S40049"/>
</dbReference>
<dbReference type="RefSeq" id="NP_390975.1">
    <property type="nucleotide sequence ID" value="NC_000964.3"/>
</dbReference>
<dbReference type="RefSeq" id="WP_009968049.1">
    <property type="nucleotide sequence ID" value="NZ_OZ025638.1"/>
</dbReference>
<dbReference type="SMR" id="P39122"/>
<dbReference type="FunCoup" id="P39122">
    <property type="interactions" value="230"/>
</dbReference>
<dbReference type="STRING" id="224308.BSU30970"/>
<dbReference type="PaxDb" id="224308-BSU30970"/>
<dbReference type="EnsemblBacteria" id="CAB15075">
    <property type="protein sequence ID" value="CAB15075"/>
    <property type="gene ID" value="BSU_30970"/>
</dbReference>
<dbReference type="GeneID" id="937990"/>
<dbReference type="KEGG" id="bsu:BSU30970"/>
<dbReference type="PATRIC" id="fig|224308.179.peg.3356"/>
<dbReference type="eggNOG" id="COG0448">
    <property type="taxonomic scope" value="Bacteria"/>
</dbReference>
<dbReference type="InParanoid" id="P39122"/>
<dbReference type="OrthoDB" id="9801810at2"/>
<dbReference type="PhylomeDB" id="P39122"/>
<dbReference type="BioCyc" id="BSUB:BSU30970-MONOMER"/>
<dbReference type="UniPathway" id="UPA00164"/>
<dbReference type="Proteomes" id="UP000001570">
    <property type="component" value="Chromosome"/>
</dbReference>
<dbReference type="GO" id="GO:0005524">
    <property type="term" value="F:ATP binding"/>
    <property type="evidence" value="ECO:0007669"/>
    <property type="project" value="UniProtKB-KW"/>
</dbReference>
<dbReference type="GO" id="GO:0008878">
    <property type="term" value="F:glucose-1-phosphate adenylyltransferase activity"/>
    <property type="evidence" value="ECO:0007669"/>
    <property type="project" value="UniProtKB-UniRule"/>
</dbReference>
<dbReference type="GO" id="GO:0005978">
    <property type="term" value="P:glycogen biosynthetic process"/>
    <property type="evidence" value="ECO:0007669"/>
    <property type="project" value="UniProtKB-UniRule"/>
</dbReference>
<dbReference type="CDD" id="cd02508">
    <property type="entry name" value="ADP_Glucose_PP"/>
    <property type="match status" value="1"/>
</dbReference>
<dbReference type="CDD" id="cd04651">
    <property type="entry name" value="LbH_G1P_AT_C"/>
    <property type="match status" value="1"/>
</dbReference>
<dbReference type="Gene3D" id="2.160.10.10">
    <property type="entry name" value="Hexapeptide repeat proteins"/>
    <property type="match status" value="1"/>
</dbReference>
<dbReference type="Gene3D" id="3.90.550.10">
    <property type="entry name" value="Spore Coat Polysaccharide Biosynthesis Protein SpsA, Chain A"/>
    <property type="match status" value="1"/>
</dbReference>
<dbReference type="HAMAP" id="MF_00624">
    <property type="entry name" value="GlgC"/>
    <property type="match status" value="1"/>
</dbReference>
<dbReference type="InterPro" id="IPR011831">
    <property type="entry name" value="ADP-Glc_PPase"/>
</dbReference>
<dbReference type="InterPro" id="IPR005836">
    <property type="entry name" value="ADP_Glu_pyroP_CS"/>
</dbReference>
<dbReference type="InterPro" id="IPR023049">
    <property type="entry name" value="GlgC_bac"/>
</dbReference>
<dbReference type="InterPro" id="IPR056818">
    <property type="entry name" value="GlmU/GlgC-like_hexapep"/>
</dbReference>
<dbReference type="InterPro" id="IPR005835">
    <property type="entry name" value="NTP_transferase_dom"/>
</dbReference>
<dbReference type="InterPro" id="IPR029044">
    <property type="entry name" value="Nucleotide-diphossugar_trans"/>
</dbReference>
<dbReference type="InterPro" id="IPR011004">
    <property type="entry name" value="Trimer_LpxA-like_sf"/>
</dbReference>
<dbReference type="NCBIfam" id="TIGR02091">
    <property type="entry name" value="glgC"/>
    <property type="match status" value="1"/>
</dbReference>
<dbReference type="NCBIfam" id="NF003670">
    <property type="entry name" value="PRK05293.1"/>
    <property type="match status" value="1"/>
</dbReference>
<dbReference type="PANTHER" id="PTHR43523:SF2">
    <property type="entry name" value="GLUCOSE-1-PHOSPHATE ADENYLYLTRANSFERASE"/>
    <property type="match status" value="1"/>
</dbReference>
<dbReference type="PANTHER" id="PTHR43523">
    <property type="entry name" value="GLUCOSE-1-PHOSPHATE ADENYLYLTRANSFERASE-RELATED"/>
    <property type="match status" value="1"/>
</dbReference>
<dbReference type="Pfam" id="PF24894">
    <property type="entry name" value="Hexapep_GlmU"/>
    <property type="match status" value="1"/>
</dbReference>
<dbReference type="Pfam" id="PF00483">
    <property type="entry name" value="NTP_transferase"/>
    <property type="match status" value="1"/>
</dbReference>
<dbReference type="SUPFAM" id="SSF53448">
    <property type="entry name" value="Nucleotide-diphospho-sugar transferases"/>
    <property type="match status" value="1"/>
</dbReference>
<dbReference type="SUPFAM" id="SSF51161">
    <property type="entry name" value="Trimeric LpxA-like enzymes"/>
    <property type="match status" value="1"/>
</dbReference>
<dbReference type="PROSITE" id="PS00808">
    <property type="entry name" value="ADP_GLC_PYROPHOSPH_1"/>
    <property type="match status" value="1"/>
</dbReference>
<dbReference type="PROSITE" id="PS00809">
    <property type="entry name" value="ADP_GLC_PYROPHOSPH_2"/>
    <property type="match status" value="1"/>
</dbReference>
<dbReference type="PROSITE" id="PS00810">
    <property type="entry name" value="ADP_GLC_PYROPHOSPH_3"/>
    <property type="match status" value="1"/>
</dbReference>
<accession>P39122</accession>
<proteinExistence type="evidence at transcript level"/>